<dbReference type="EC" id="7.1.2.2" evidence="1"/>
<dbReference type="EMBL" id="CP000492">
    <property type="protein sequence ID" value="ABL64119.1"/>
    <property type="molecule type" value="Genomic_DNA"/>
</dbReference>
<dbReference type="RefSeq" id="WP_011743961.1">
    <property type="nucleotide sequence ID" value="NC_008639.1"/>
</dbReference>
<dbReference type="SMR" id="A1BCJ2"/>
<dbReference type="STRING" id="290317.Cpha266_0049"/>
<dbReference type="KEGG" id="cph:Cpha266_0049"/>
<dbReference type="eggNOG" id="COG0055">
    <property type="taxonomic scope" value="Bacteria"/>
</dbReference>
<dbReference type="HOGENOM" id="CLU_022398_0_2_10"/>
<dbReference type="OrthoDB" id="9801639at2"/>
<dbReference type="Proteomes" id="UP000008701">
    <property type="component" value="Chromosome"/>
</dbReference>
<dbReference type="GO" id="GO:0005886">
    <property type="term" value="C:plasma membrane"/>
    <property type="evidence" value="ECO:0007669"/>
    <property type="project" value="UniProtKB-SubCell"/>
</dbReference>
<dbReference type="GO" id="GO:0045259">
    <property type="term" value="C:proton-transporting ATP synthase complex"/>
    <property type="evidence" value="ECO:0007669"/>
    <property type="project" value="UniProtKB-KW"/>
</dbReference>
<dbReference type="GO" id="GO:0005524">
    <property type="term" value="F:ATP binding"/>
    <property type="evidence" value="ECO:0007669"/>
    <property type="project" value="UniProtKB-UniRule"/>
</dbReference>
<dbReference type="GO" id="GO:0016887">
    <property type="term" value="F:ATP hydrolysis activity"/>
    <property type="evidence" value="ECO:0007669"/>
    <property type="project" value="InterPro"/>
</dbReference>
<dbReference type="GO" id="GO:0046933">
    <property type="term" value="F:proton-transporting ATP synthase activity, rotational mechanism"/>
    <property type="evidence" value="ECO:0007669"/>
    <property type="project" value="UniProtKB-UniRule"/>
</dbReference>
<dbReference type="CDD" id="cd18110">
    <property type="entry name" value="ATP-synt_F1_beta_C"/>
    <property type="match status" value="1"/>
</dbReference>
<dbReference type="CDD" id="cd18115">
    <property type="entry name" value="ATP-synt_F1_beta_N"/>
    <property type="match status" value="1"/>
</dbReference>
<dbReference type="CDD" id="cd01133">
    <property type="entry name" value="F1-ATPase_beta_CD"/>
    <property type="match status" value="1"/>
</dbReference>
<dbReference type="FunFam" id="1.10.1140.10:FF:000001">
    <property type="entry name" value="ATP synthase subunit beta"/>
    <property type="match status" value="1"/>
</dbReference>
<dbReference type="FunFam" id="3.40.50.300:FF:000026">
    <property type="entry name" value="ATP synthase subunit beta"/>
    <property type="match status" value="1"/>
</dbReference>
<dbReference type="Gene3D" id="2.40.10.170">
    <property type="match status" value="1"/>
</dbReference>
<dbReference type="Gene3D" id="1.10.1140.10">
    <property type="entry name" value="Bovine Mitochondrial F1-atpase, Atp Synthase Beta Chain, Chain D, domain 3"/>
    <property type="match status" value="1"/>
</dbReference>
<dbReference type="Gene3D" id="3.40.50.300">
    <property type="entry name" value="P-loop containing nucleotide triphosphate hydrolases"/>
    <property type="match status" value="1"/>
</dbReference>
<dbReference type="HAMAP" id="MF_01347">
    <property type="entry name" value="ATP_synth_beta_bact"/>
    <property type="match status" value="1"/>
</dbReference>
<dbReference type="InterPro" id="IPR003593">
    <property type="entry name" value="AAA+_ATPase"/>
</dbReference>
<dbReference type="InterPro" id="IPR055190">
    <property type="entry name" value="ATP-synt_VA_C"/>
</dbReference>
<dbReference type="InterPro" id="IPR005722">
    <property type="entry name" value="ATP_synth_F1_bsu"/>
</dbReference>
<dbReference type="InterPro" id="IPR020003">
    <property type="entry name" value="ATPase_a/bsu_AS"/>
</dbReference>
<dbReference type="InterPro" id="IPR050053">
    <property type="entry name" value="ATPase_alpha/beta_chains"/>
</dbReference>
<dbReference type="InterPro" id="IPR004100">
    <property type="entry name" value="ATPase_F1/V1/A1_a/bsu_N"/>
</dbReference>
<dbReference type="InterPro" id="IPR036121">
    <property type="entry name" value="ATPase_F1/V1/A1_a/bsu_N_sf"/>
</dbReference>
<dbReference type="InterPro" id="IPR000194">
    <property type="entry name" value="ATPase_F1/V1/A1_a/bsu_nucl-bd"/>
</dbReference>
<dbReference type="InterPro" id="IPR024034">
    <property type="entry name" value="ATPase_F1/V1_b/a_C"/>
</dbReference>
<dbReference type="InterPro" id="IPR027417">
    <property type="entry name" value="P-loop_NTPase"/>
</dbReference>
<dbReference type="NCBIfam" id="TIGR01039">
    <property type="entry name" value="atpD"/>
    <property type="match status" value="1"/>
</dbReference>
<dbReference type="PANTHER" id="PTHR15184">
    <property type="entry name" value="ATP SYNTHASE"/>
    <property type="match status" value="1"/>
</dbReference>
<dbReference type="PANTHER" id="PTHR15184:SF71">
    <property type="entry name" value="ATP SYNTHASE SUBUNIT BETA, MITOCHONDRIAL"/>
    <property type="match status" value="1"/>
</dbReference>
<dbReference type="Pfam" id="PF00006">
    <property type="entry name" value="ATP-synt_ab"/>
    <property type="match status" value="1"/>
</dbReference>
<dbReference type="Pfam" id="PF02874">
    <property type="entry name" value="ATP-synt_ab_N"/>
    <property type="match status" value="1"/>
</dbReference>
<dbReference type="Pfam" id="PF22919">
    <property type="entry name" value="ATP-synt_VA_C"/>
    <property type="match status" value="1"/>
</dbReference>
<dbReference type="PIRSF" id="PIRSF039072">
    <property type="entry name" value="ATPase_subunit_beta"/>
    <property type="match status" value="1"/>
</dbReference>
<dbReference type="SMART" id="SM00382">
    <property type="entry name" value="AAA"/>
    <property type="match status" value="1"/>
</dbReference>
<dbReference type="SUPFAM" id="SSF47917">
    <property type="entry name" value="C-terminal domain of alpha and beta subunits of F1 ATP synthase"/>
    <property type="match status" value="1"/>
</dbReference>
<dbReference type="SUPFAM" id="SSF50615">
    <property type="entry name" value="N-terminal domain of alpha and beta subunits of F1 ATP synthase"/>
    <property type="match status" value="1"/>
</dbReference>
<dbReference type="SUPFAM" id="SSF52540">
    <property type="entry name" value="P-loop containing nucleoside triphosphate hydrolases"/>
    <property type="match status" value="1"/>
</dbReference>
<dbReference type="PROSITE" id="PS00152">
    <property type="entry name" value="ATPASE_ALPHA_BETA"/>
    <property type="match status" value="1"/>
</dbReference>
<reference key="1">
    <citation type="submission" date="2006-12" db="EMBL/GenBank/DDBJ databases">
        <title>Complete sequence of Chlorobium phaeobacteroides DSM 266.</title>
        <authorList>
            <consortium name="US DOE Joint Genome Institute"/>
            <person name="Copeland A."/>
            <person name="Lucas S."/>
            <person name="Lapidus A."/>
            <person name="Barry K."/>
            <person name="Detter J.C."/>
            <person name="Glavina del Rio T."/>
            <person name="Hammon N."/>
            <person name="Israni S."/>
            <person name="Pitluck S."/>
            <person name="Goltsman E."/>
            <person name="Schmutz J."/>
            <person name="Larimer F."/>
            <person name="Land M."/>
            <person name="Hauser L."/>
            <person name="Mikhailova N."/>
            <person name="Li T."/>
            <person name="Overmann J."/>
            <person name="Bryant D.A."/>
            <person name="Richardson P."/>
        </authorList>
    </citation>
    <scope>NUCLEOTIDE SEQUENCE [LARGE SCALE GENOMIC DNA]</scope>
    <source>
        <strain>DSM 266 / SMG 266 / 2430</strain>
    </source>
</reference>
<organism>
    <name type="scientific">Chlorobium phaeobacteroides (strain DSM 266 / SMG 266 / 2430)</name>
    <dbReference type="NCBI Taxonomy" id="290317"/>
    <lineage>
        <taxon>Bacteria</taxon>
        <taxon>Pseudomonadati</taxon>
        <taxon>Chlorobiota</taxon>
        <taxon>Chlorobiia</taxon>
        <taxon>Chlorobiales</taxon>
        <taxon>Chlorobiaceae</taxon>
        <taxon>Chlorobium/Pelodictyon group</taxon>
        <taxon>Chlorobium</taxon>
    </lineage>
</organism>
<comment type="function">
    <text evidence="1">Produces ATP from ADP in the presence of a proton gradient across the membrane. The catalytic sites are hosted primarily by the beta subunits.</text>
</comment>
<comment type="catalytic activity">
    <reaction evidence="1">
        <text>ATP + H2O + 4 H(+)(in) = ADP + phosphate + 5 H(+)(out)</text>
        <dbReference type="Rhea" id="RHEA:57720"/>
        <dbReference type="ChEBI" id="CHEBI:15377"/>
        <dbReference type="ChEBI" id="CHEBI:15378"/>
        <dbReference type="ChEBI" id="CHEBI:30616"/>
        <dbReference type="ChEBI" id="CHEBI:43474"/>
        <dbReference type="ChEBI" id="CHEBI:456216"/>
        <dbReference type="EC" id="7.1.2.2"/>
    </reaction>
</comment>
<comment type="subunit">
    <text evidence="1">F-type ATPases have 2 components, CF(1) - the catalytic core - and CF(0) - the membrane proton channel. CF(1) has five subunits: alpha(3), beta(3), gamma(1), delta(1), epsilon(1). CF(0) has four main subunits: a(1), b(1), b'(1) and c(9-12).</text>
</comment>
<comment type="subcellular location">
    <subcellularLocation>
        <location evidence="1">Cell inner membrane</location>
        <topology evidence="1">Peripheral membrane protein</topology>
    </subcellularLocation>
</comment>
<comment type="similarity">
    <text evidence="1">Belongs to the ATPase alpha/beta chains family.</text>
</comment>
<gene>
    <name evidence="1" type="primary">atpD</name>
    <name type="ordered locus">Cpha266_0049</name>
</gene>
<accession>A1BCJ2</accession>
<name>ATPB_CHLPD</name>
<protein>
    <recommendedName>
        <fullName evidence="1">ATP synthase subunit beta</fullName>
        <ecNumber evidence="1">7.1.2.2</ecNumber>
    </recommendedName>
    <alternativeName>
        <fullName evidence="1">ATP synthase F1 sector subunit beta</fullName>
    </alternativeName>
    <alternativeName>
        <fullName evidence="1">F-ATPase subunit beta</fullName>
    </alternativeName>
</protein>
<proteinExistence type="inferred from homology"/>
<feature type="chain" id="PRO_1000055101" description="ATP synthase subunit beta">
    <location>
        <begin position="1"/>
        <end position="462"/>
    </location>
</feature>
<feature type="binding site" evidence="1">
    <location>
        <begin position="151"/>
        <end position="158"/>
    </location>
    <ligand>
        <name>ATP</name>
        <dbReference type="ChEBI" id="CHEBI:30616"/>
    </ligand>
</feature>
<keyword id="KW-0066">ATP synthesis</keyword>
<keyword id="KW-0067">ATP-binding</keyword>
<keyword id="KW-0997">Cell inner membrane</keyword>
<keyword id="KW-1003">Cell membrane</keyword>
<keyword id="KW-0139">CF(1)</keyword>
<keyword id="KW-0375">Hydrogen ion transport</keyword>
<keyword id="KW-0406">Ion transport</keyword>
<keyword id="KW-0472">Membrane</keyword>
<keyword id="KW-0547">Nucleotide-binding</keyword>
<keyword id="KW-1185">Reference proteome</keyword>
<keyword id="KW-1278">Translocase</keyword>
<keyword id="KW-0813">Transport</keyword>
<evidence type="ECO:0000255" key="1">
    <source>
        <dbReference type="HAMAP-Rule" id="MF_01347"/>
    </source>
</evidence>
<sequence length="462" mass="50339">MQEGKISQIIGPVVDVDFPEGQLPSILDALTITRPDGTKLVLETQQHLGEERVRTVAMESTDGLIRGLSVTNTERPIQVPVGPEVLGRMLNVVGDPIDGRGSVHTSKTYSIHRSAPKFDELSTKTEMFETGIKVIDLLEPYSRGGKTGLFGGAGVGKTVLIMELINNIAKQQSGYSVFAGVGERTREGNDLWHEMMESGVIDKTALVFGQMNEPPGARARVALTGLSIAEYFRDEENRDVLLFIDNIFRFTQAGSEVSALLGRMPSAVGYQPTLATEMGELQDRIVSTKKGSVTSVQAIYVPADDLTDPAPATAFAHLDATTVLSRSIAELGIYPAVDPLDSTSRILDPNIVGDDHYDTAQAVKQILQRYKDLQDIIAILGMDELSDEDKLVVSRARKVQRFLSQPFFVAEAFTGLAGKYVKLDETIKGFKEIIAGKHDNLPESAFYLVGTIEEAVQKAKTL</sequence>